<proteinExistence type="uncertain"/>
<name>RS10L_HUMAN</name>
<keyword id="KW-1267">Proteomics identification</keyword>
<keyword id="KW-1185">Reference proteome</keyword>
<keyword id="KW-0687">Ribonucleoprotein</keyword>
<keyword id="KW-0689">Ribosomal protein</keyword>
<feature type="chain" id="PRO_0000346776" description="Putative ribosomal protein eS10-like">
    <location>
        <begin position="1"/>
        <end position="176"/>
    </location>
</feature>
<feature type="region of interest" description="Disordered" evidence="1">
    <location>
        <begin position="104"/>
        <end position="176"/>
    </location>
</feature>
<feature type="compositionally biased region" description="Basic and acidic residues" evidence="1">
    <location>
        <begin position="108"/>
        <end position="139"/>
    </location>
</feature>
<dbReference type="EMBL" id="AL118502">
    <property type="status" value="NOT_ANNOTATED_CDS"/>
    <property type="molecule type" value="Genomic_DNA"/>
</dbReference>
<dbReference type="SMR" id="Q9NQ39"/>
<dbReference type="FunCoup" id="Q9NQ39">
    <property type="interactions" value="256"/>
</dbReference>
<dbReference type="IntAct" id="Q9NQ39">
    <property type="interactions" value="13"/>
</dbReference>
<dbReference type="MINT" id="Q9NQ39"/>
<dbReference type="iPTMnet" id="Q9NQ39"/>
<dbReference type="PhosphoSitePlus" id="Q9NQ39"/>
<dbReference type="BioMuta" id="HGNC:15795"/>
<dbReference type="DMDM" id="74752896"/>
<dbReference type="jPOST" id="Q9NQ39"/>
<dbReference type="MassIVE" id="Q9NQ39"/>
<dbReference type="ProteomicsDB" id="82077"/>
<dbReference type="AGR" id="HGNC:15795"/>
<dbReference type="GeneCards" id="RPS10P5"/>
<dbReference type="HGNC" id="HGNC:15795">
    <property type="gene designation" value="RPS10P5"/>
</dbReference>
<dbReference type="neXtProt" id="NX_Q9NQ39"/>
<dbReference type="InParanoid" id="Q9NQ39"/>
<dbReference type="PAN-GO" id="Q9NQ39">
    <property type="GO annotations" value="3 GO annotations based on evolutionary models"/>
</dbReference>
<dbReference type="PhylomeDB" id="Q9NQ39"/>
<dbReference type="PathwayCommons" id="Q9NQ39"/>
<dbReference type="SignaLink" id="Q9NQ39"/>
<dbReference type="Pharos" id="Q9NQ39">
    <property type="development level" value="Tdark"/>
</dbReference>
<dbReference type="Proteomes" id="UP000005640">
    <property type="component" value="Unplaced"/>
</dbReference>
<dbReference type="RNAct" id="Q9NQ39">
    <property type="molecule type" value="protein"/>
</dbReference>
<dbReference type="GO" id="GO:0022627">
    <property type="term" value="C:cytosolic small ribosomal subunit"/>
    <property type="evidence" value="ECO:0000318"/>
    <property type="project" value="GO_Central"/>
</dbReference>
<dbReference type="GO" id="GO:0003723">
    <property type="term" value="F:RNA binding"/>
    <property type="evidence" value="ECO:0000318"/>
    <property type="project" value="GO_Central"/>
</dbReference>
<dbReference type="GO" id="GO:0003735">
    <property type="term" value="F:structural constituent of ribosome"/>
    <property type="evidence" value="ECO:0000318"/>
    <property type="project" value="GO_Central"/>
</dbReference>
<dbReference type="FunFam" id="1.10.10.10:FF:001335">
    <property type="entry name" value="40S ribosomal protein S10"/>
    <property type="match status" value="1"/>
</dbReference>
<dbReference type="Gene3D" id="1.10.10.10">
    <property type="entry name" value="Winged helix-like DNA-binding domain superfamily/Winged helix DNA-binding domain"/>
    <property type="match status" value="1"/>
</dbReference>
<dbReference type="InterPro" id="IPR005326">
    <property type="entry name" value="Plectin_eS10_N"/>
</dbReference>
<dbReference type="InterPro" id="IPR037447">
    <property type="entry name" value="Ribosomal_eS10"/>
</dbReference>
<dbReference type="InterPro" id="IPR036388">
    <property type="entry name" value="WH-like_DNA-bd_sf"/>
</dbReference>
<dbReference type="PANTHER" id="PTHR12146">
    <property type="entry name" value="40S RIBOSOMAL PROTEIN S10"/>
    <property type="match status" value="1"/>
</dbReference>
<dbReference type="PANTHER" id="PTHR12146:SF8">
    <property type="entry name" value="RIBOSOMAL PROTEIN ES10-LIKE-RELATED"/>
    <property type="match status" value="1"/>
</dbReference>
<dbReference type="Pfam" id="PF03501">
    <property type="entry name" value="S10_plectin"/>
    <property type="match status" value="1"/>
</dbReference>
<evidence type="ECO:0000256" key="1">
    <source>
        <dbReference type="SAM" id="MobiDB-lite"/>
    </source>
</evidence>
<evidence type="ECO:0000305" key="2"/>
<gene>
    <name type="primary">RPS10P5</name>
    <name type="synonym">RPS10L</name>
</gene>
<protein>
    <recommendedName>
        <fullName evidence="2">Putative ribosomal protein eS10-like</fullName>
    </recommendedName>
    <alternativeName>
        <fullName>Putative 40S ribosomal protein S10-like</fullName>
    </alternativeName>
</protein>
<sequence>MLMPKKNRIAIHELLFKEGVMVAKKDVHMPKHPELADKNVPNLHVMKAMQSLKSRGCVKEQFAWRHFYWYLTNEGSQYLRDYLHLPPEIVPATLHLPPEIVPATLHRSRPETGRPRPKGLEGKRPARLTRREADRDTYRRCSVPPGADKKAEAGAGSATEFQFRGRCGRGRGQPPQ</sequence>
<accession>Q9NQ39</accession>
<organism>
    <name type="scientific">Homo sapiens</name>
    <name type="common">Human</name>
    <dbReference type="NCBI Taxonomy" id="9606"/>
    <lineage>
        <taxon>Eukaryota</taxon>
        <taxon>Metazoa</taxon>
        <taxon>Chordata</taxon>
        <taxon>Craniata</taxon>
        <taxon>Vertebrata</taxon>
        <taxon>Euteleostomi</taxon>
        <taxon>Mammalia</taxon>
        <taxon>Eutheria</taxon>
        <taxon>Euarchontoglires</taxon>
        <taxon>Primates</taxon>
        <taxon>Haplorrhini</taxon>
        <taxon>Catarrhini</taxon>
        <taxon>Hominidae</taxon>
        <taxon>Homo</taxon>
    </lineage>
</organism>
<reference key="1">
    <citation type="journal article" date="2001" name="Nature">
        <title>The DNA sequence and comparative analysis of human chromosome 20.</title>
        <authorList>
            <person name="Deloukas P."/>
            <person name="Matthews L.H."/>
            <person name="Ashurst J.L."/>
            <person name="Burton J."/>
            <person name="Gilbert J.G.R."/>
            <person name="Jones M."/>
            <person name="Stavrides G."/>
            <person name="Almeida J.P."/>
            <person name="Babbage A.K."/>
            <person name="Bagguley C.L."/>
            <person name="Bailey J."/>
            <person name="Barlow K.F."/>
            <person name="Bates K.N."/>
            <person name="Beard L.M."/>
            <person name="Beare D.M."/>
            <person name="Beasley O.P."/>
            <person name="Bird C.P."/>
            <person name="Blakey S.E."/>
            <person name="Bridgeman A.M."/>
            <person name="Brown A.J."/>
            <person name="Buck D."/>
            <person name="Burrill W.D."/>
            <person name="Butler A.P."/>
            <person name="Carder C."/>
            <person name="Carter N.P."/>
            <person name="Chapman J.C."/>
            <person name="Clamp M."/>
            <person name="Clark G."/>
            <person name="Clark L.N."/>
            <person name="Clark S.Y."/>
            <person name="Clee C.M."/>
            <person name="Clegg S."/>
            <person name="Cobley V.E."/>
            <person name="Collier R.E."/>
            <person name="Connor R.E."/>
            <person name="Corby N.R."/>
            <person name="Coulson A."/>
            <person name="Coville G.J."/>
            <person name="Deadman R."/>
            <person name="Dhami P.D."/>
            <person name="Dunn M."/>
            <person name="Ellington A.G."/>
            <person name="Frankland J.A."/>
            <person name="Fraser A."/>
            <person name="French L."/>
            <person name="Garner P."/>
            <person name="Grafham D.V."/>
            <person name="Griffiths C."/>
            <person name="Griffiths M.N.D."/>
            <person name="Gwilliam R."/>
            <person name="Hall R.E."/>
            <person name="Hammond S."/>
            <person name="Harley J.L."/>
            <person name="Heath P.D."/>
            <person name="Ho S."/>
            <person name="Holden J.L."/>
            <person name="Howden P.J."/>
            <person name="Huckle E."/>
            <person name="Hunt A.R."/>
            <person name="Hunt S.E."/>
            <person name="Jekosch K."/>
            <person name="Johnson C.M."/>
            <person name="Johnson D."/>
            <person name="Kay M.P."/>
            <person name="Kimberley A.M."/>
            <person name="King A."/>
            <person name="Knights A."/>
            <person name="Laird G.K."/>
            <person name="Lawlor S."/>
            <person name="Lehvaeslaiho M.H."/>
            <person name="Leversha M.A."/>
            <person name="Lloyd C."/>
            <person name="Lloyd D.M."/>
            <person name="Lovell J.D."/>
            <person name="Marsh V.L."/>
            <person name="Martin S.L."/>
            <person name="McConnachie L.J."/>
            <person name="McLay K."/>
            <person name="McMurray A.A."/>
            <person name="Milne S.A."/>
            <person name="Mistry D."/>
            <person name="Moore M.J.F."/>
            <person name="Mullikin J.C."/>
            <person name="Nickerson T."/>
            <person name="Oliver K."/>
            <person name="Parker A."/>
            <person name="Patel R."/>
            <person name="Pearce T.A.V."/>
            <person name="Peck A.I."/>
            <person name="Phillimore B.J.C.T."/>
            <person name="Prathalingam S.R."/>
            <person name="Plumb R.W."/>
            <person name="Ramsay H."/>
            <person name="Rice C.M."/>
            <person name="Ross M.T."/>
            <person name="Scott C.E."/>
            <person name="Sehra H.K."/>
            <person name="Shownkeen R."/>
            <person name="Sims S."/>
            <person name="Skuce C.D."/>
            <person name="Smith M.L."/>
            <person name="Soderlund C."/>
            <person name="Steward C.A."/>
            <person name="Sulston J.E."/>
            <person name="Swann R.M."/>
            <person name="Sycamore N."/>
            <person name="Taylor R."/>
            <person name="Tee L."/>
            <person name="Thomas D.W."/>
            <person name="Thorpe A."/>
            <person name="Tracey A."/>
            <person name="Tromans A.C."/>
            <person name="Vaudin M."/>
            <person name="Wall M."/>
            <person name="Wallis J.M."/>
            <person name="Whitehead S.L."/>
            <person name="Whittaker P."/>
            <person name="Willey D.L."/>
            <person name="Williams L."/>
            <person name="Williams S.A."/>
            <person name="Wilming L."/>
            <person name="Wray P.W."/>
            <person name="Hubbard T."/>
            <person name="Durbin R.M."/>
            <person name="Bentley D.R."/>
            <person name="Beck S."/>
            <person name="Rogers J."/>
        </authorList>
    </citation>
    <scope>NUCLEOTIDE SEQUENCE [LARGE SCALE GENOMIC DNA]</scope>
</reference>
<comment type="similarity">
    <text evidence="2">Belongs to the eukaryotic ribosomal protein eS10 family.</text>
</comment>
<comment type="caution">
    <text evidence="2">Could be the product of a pseudogene.</text>
</comment>